<reference key="1">
    <citation type="journal article" date="2011" name="Proc. Natl. Acad. Sci. U.S.A.">
        <title>Genomic anatomy of Escherichia coli O157:H7 outbreaks.</title>
        <authorList>
            <person name="Eppinger M."/>
            <person name="Mammel M.K."/>
            <person name="Leclerc J.E."/>
            <person name="Ravel J."/>
            <person name="Cebula T.A."/>
        </authorList>
    </citation>
    <scope>NUCLEOTIDE SEQUENCE [LARGE SCALE GENOMIC DNA]</scope>
    <source>
        <strain>EC4115 / EHEC</strain>
    </source>
</reference>
<gene>
    <name evidence="1" type="primary">wecG</name>
    <name evidence="1" type="synonym">rffM</name>
    <name type="ordered locus">ECH74115_5228</name>
</gene>
<keyword id="KW-0328">Glycosyltransferase</keyword>
<keyword id="KW-0808">Transferase</keyword>
<accession>B5YY43</accession>
<name>WECG_ECO5E</name>
<dbReference type="EC" id="2.4.1.180" evidence="1"/>
<dbReference type="EMBL" id="CP001164">
    <property type="protein sequence ID" value="ACI37416.1"/>
    <property type="molecule type" value="Genomic_DNA"/>
</dbReference>
<dbReference type="RefSeq" id="WP_001064053.1">
    <property type="nucleotide sequence ID" value="NC_011353.1"/>
</dbReference>
<dbReference type="SMR" id="B5YY43"/>
<dbReference type="CAZy" id="GT26">
    <property type="family name" value="Glycosyltransferase Family 26"/>
</dbReference>
<dbReference type="KEGG" id="ecf:ECH74115_5228"/>
<dbReference type="HOGENOM" id="CLU_063203_3_2_6"/>
<dbReference type="UniPathway" id="UPA00566"/>
<dbReference type="GO" id="GO:0047241">
    <property type="term" value="F:lipopolysaccharide N-acetylmannosaminouronosyltransferase activity"/>
    <property type="evidence" value="ECO:0007669"/>
    <property type="project" value="UniProtKB-UniRule"/>
</dbReference>
<dbReference type="GO" id="GO:0009246">
    <property type="term" value="P:enterobacterial common antigen biosynthetic process"/>
    <property type="evidence" value="ECO:0007669"/>
    <property type="project" value="UniProtKB-UniRule"/>
</dbReference>
<dbReference type="CDD" id="cd06533">
    <property type="entry name" value="Glyco_transf_WecG_TagA"/>
    <property type="match status" value="1"/>
</dbReference>
<dbReference type="HAMAP" id="MF_01001">
    <property type="entry name" value="WecG_RffM"/>
    <property type="match status" value="1"/>
</dbReference>
<dbReference type="InterPro" id="IPR023085">
    <property type="entry name" value="UDP-ManNAcA_Trfase_WecG"/>
</dbReference>
<dbReference type="InterPro" id="IPR004629">
    <property type="entry name" value="WecG_TagA_CpsF"/>
</dbReference>
<dbReference type="NCBIfam" id="NF002980">
    <property type="entry name" value="PRK03692.1"/>
    <property type="match status" value="1"/>
</dbReference>
<dbReference type="NCBIfam" id="TIGR00696">
    <property type="entry name" value="wecG_tagA_cpsF"/>
    <property type="match status" value="1"/>
</dbReference>
<dbReference type="PANTHER" id="PTHR34136">
    <property type="match status" value="1"/>
</dbReference>
<dbReference type="PANTHER" id="PTHR34136:SF1">
    <property type="entry name" value="UDP-N-ACETYL-D-MANNOSAMINURONIC ACID TRANSFERASE"/>
    <property type="match status" value="1"/>
</dbReference>
<dbReference type="Pfam" id="PF03808">
    <property type="entry name" value="Glyco_tran_WecG"/>
    <property type="match status" value="1"/>
</dbReference>
<feature type="chain" id="PRO_1000134572" description="UDP-N-acetyl-D-mannosaminuronic acid transferase">
    <location>
        <begin position="1"/>
        <end position="246"/>
    </location>
</feature>
<proteinExistence type="inferred from homology"/>
<protein>
    <recommendedName>
        <fullName evidence="1">UDP-N-acetyl-D-mannosaminuronic acid transferase</fullName>
        <shortName evidence="1">UDP-ManNAcA transferase</shortName>
        <ecNumber evidence="1">2.4.1.180</ecNumber>
    </recommendedName>
</protein>
<evidence type="ECO:0000255" key="1">
    <source>
        <dbReference type="HAMAP-Rule" id="MF_01001"/>
    </source>
</evidence>
<sequence>MNNNTTAPTYTLRGLQLIGWRDMQHALDYLFADGQLKQGTLVAINAEKMLTIEENAEVRELINAAEFKYADGISVVRSVRKKYPQAQVSRVAGADLWEELMARAGKEGTTVFLVGGKPEVLAQTEAKLRNQWNVNIVGSQDGYFKPEQRQALFERIHASGAQIVTVAMGSPKQEIFMRDCRLVHPDALYMGVGGTYDVFTGHVKRAPKIWQTLGLEWLYRLLSQPSRIKRQLRLLRYLRWHYTGNL</sequence>
<comment type="function">
    <text evidence="1">Catalyzes the synthesis of Und-PP-GlcNAc-ManNAcA (Lipid II), the second lipid-linked intermediate involved in enterobacterial common antigen (ECA) synthesis.</text>
</comment>
<comment type="catalytic activity">
    <reaction evidence="1">
        <text>UDP-N-acetyl-alpha-D-mannosaminouronate + N-acetyl-alpha-D-glucosaminyl-di-trans,octa-cis-undecaprenyl diphosphate = beta-D-ManNAcA-(1-&gt;4)-alpha-D-GlcNAc-di-trans,octa-cis-undecaprenyl diphosphate + UDP + H(+)</text>
        <dbReference type="Rhea" id="RHEA:28366"/>
        <dbReference type="ChEBI" id="CHEBI:15378"/>
        <dbReference type="ChEBI" id="CHEBI:58223"/>
        <dbReference type="ChEBI" id="CHEBI:61495"/>
        <dbReference type="ChEBI" id="CHEBI:62959"/>
        <dbReference type="ChEBI" id="CHEBI:70731"/>
        <dbReference type="EC" id="2.4.1.180"/>
    </reaction>
</comment>
<comment type="pathway">
    <text evidence="1">Bacterial outer membrane biogenesis; enterobacterial common antigen biosynthesis.</text>
</comment>
<comment type="similarity">
    <text evidence="1">Belongs to the glycosyltransferase 26 family.</text>
</comment>
<organism>
    <name type="scientific">Escherichia coli O157:H7 (strain EC4115 / EHEC)</name>
    <dbReference type="NCBI Taxonomy" id="444450"/>
    <lineage>
        <taxon>Bacteria</taxon>
        <taxon>Pseudomonadati</taxon>
        <taxon>Pseudomonadota</taxon>
        <taxon>Gammaproteobacteria</taxon>
        <taxon>Enterobacterales</taxon>
        <taxon>Enterobacteriaceae</taxon>
        <taxon>Escherichia</taxon>
    </lineage>
</organism>